<feature type="chain" id="PRO_0000107446" description="Uncharacterized protein MJ1626">
    <location>
        <begin position="1"/>
        <end position="765"/>
    </location>
</feature>
<proteinExistence type="predicted"/>
<sequence length="765" mass="89607">MLITSSLLPPSGTWIFNINSLFCSLSIKNALSNLPLMRFCNSSTTQHTSTLVISLFIISPENIIFFFRIFYYCDNMEREEFLKYLRQGKYDKLAKLINSYSDILSFLDELFTSNKKDDVRRALLVLKRLDNEVIERYLYYILLNLNEKRIIAKEAEEILKKITNKESVEEAILEIAKKPLDEKIVYLFLQNMKEGNIFFRAILEHTKSKNMEESIKILLKNYNSEMILKILANKLYSSEKDERELTINILLNIVDSLTDEQKNILRGHLSVSLLGDEDKKLYRKFKQLFEKLDIPAELSDEQIKSLLKSHGKTTLNIILRENIKLPANFYNREFLKDFLYTGDEEKQFVGVKLISLKKDSKKKVDLLFRFLNYGYGKAKTAAIRELKKIAQNNNELKKYIENKTLMYAKKMNLGLKISSLRILKEFAKKEHLEFLINEHKRLKELVYKLEEEKFMGGFRHLLMMEEEIRKCNVAMRLIEEIVAEICLKNDIHYNDLKISEKLGYEFYRTMELIGVKNLNLIDIHEFLEDVKRDGELITYLSGIVINNNKIDDNLAKKILEVTEKAEMEDKDVLNANKIMIYASLNRVDKIGEIINMAEGYYSKLAFINGVKKFIDEKLLDEEKINLLIPKIAEMIYSTKKLRLMALEFFKNYPNELVLPILINEIGNYRGEDKLMIDVISNVIFKYPNNIHSIRELLNTDKRNSALKILLKVSEKRPELLEDFIYLLAGMYSSANEEDKKLIKKILKNITTEEQKLILKPIIGDL</sequence>
<protein>
    <recommendedName>
        <fullName>Uncharacterized protein MJ1626</fullName>
    </recommendedName>
</protein>
<gene>
    <name type="ordered locus">MJ1626</name>
</gene>
<organism>
    <name type="scientific">Methanocaldococcus jannaschii (strain ATCC 43067 / DSM 2661 / JAL-1 / JCM 10045 / NBRC 100440)</name>
    <name type="common">Methanococcus jannaschii</name>
    <dbReference type="NCBI Taxonomy" id="243232"/>
    <lineage>
        <taxon>Archaea</taxon>
        <taxon>Methanobacteriati</taxon>
        <taxon>Methanobacteriota</taxon>
        <taxon>Methanomada group</taxon>
        <taxon>Methanococci</taxon>
        <taxon>Methanococcales</taxon>
        <taxon>Methanocaldococcaceae</taxon>
        <taxon>Methanocaldococcus</taxon>
    </lineage>
</organism>
<keyword id="KW-1185">Reference proteome</keyword>
<dbReference type="EMBL" id="L77117">
    <property type="protein sequence ID" value="AAB99649.1"/>
    <property type="molecule type" value="Genomic_DNA"/>
</dbReference>
<dbReference type="PIR" id="G64502">
    <property type="entry name" value="G64502"/>
</dbReference>
<dbReference type="SMR" id="Q59019"/>
<dbReference type="STRING" id="243232.MJ_1626"/>
<dbReference type="PaxDb" id="243232-MJ_1626"/>
<dbReference type="EnsemblBacteria" id="AAB99649">
    <property type="protein sequence ID" value="AAB99649"/>
    <property type="gene ID" value="MJ_1626"/>
</dbReference>
<dbReference type="KEGG" id="mja:MJ_1626"/>
<dbReference type="eggNOG" id="arCOG08290">
    <property type="taxonomic scope" value="Archaea"/>
</dbReference>
<dbReference type="HOGENOM" id="CLU_400448_0_0_2"/>
<dbReference type="InParanoid" id="Q59019"/>
<dbReference type="Proteomes" id="UP000000805">
    <property type="component" value="Chromosome"/>
</dbReference>
<dbReference type="InterPro" id="IPR016024">
    <property type="entry name" value="ARM-type_fold"/>
</dbReference>
<dbReference type="SUPFAM" id="SSF48371">
    <property type="entry name" value="ARM repeat"/>
    <property type="match status" value="1"/>
</dbReference>
<name>Y1626_METJA</name>
<accession>Q59019</accession>
<reference key="1">
    <citation type="journal article" date="1996" name="Science">
        <title>Complete genome sequence of the methanogenic archaeon, Methanococcus jannaschii.</title>
        <authorList>
            <person name="Bult C.J."/>
            <person name="White O."/>
            <person name="Olsen G.J."/>
            <person name="Zhou L."/>
            <person name="Fleischmann R.D."/>
            <person name="Sutton G.G."/>
            <person name="Blake J.A."/>
            <person name="FitzGerald L.M."/>
            <person name="Clayton R.A."/>
            <person name="Gocayne J.D."/>
            <person name="Kerlavage A.R."/>
            <person name="Dougherty B.A."/>
            <person name="Tomb J.-F."/>
            <person name="Adams M.D."/>
            <person name="Reich C.I."/>
            <person name="Overbeek R."/>
            <person name="Kirkness E.F."/>
            <person name="Weinstock K.G."/>
            <person name="Merrick J.M."/>
            <person name="Glodek A."/>
            <person name="Scott J.L."/>
            <person name="Geoghagen N.S.M."/>
            <person name="Weidman J.F."/>
            <person name="Fuhrmann J.L."/>
            <person name="Nguyen D."/>
            <person name="Utterback T.R."/>
            <person name="Kelley J.M."/>
            <person name="Peterson J.D."/>
            <person name="Sadow P.W."/>
            <person name="Hanna M.C."/>
            <person name="Cotton M.D."/>
            <person name="Roberts K.M."/>
            <person name="Hurst M.A."/>
            <person name="Kaine B.P."/>
            <person name="Borodovsky M."/>
            <person name="Klenk H.-P."/>
            <person name="Fraser C.M."/>
            <person name="Smith H.O."/>
            <person name="Woese C.R."/>
            <person name="Venter J.C."/>
        </authorList>
    </citation>
    <scope>NUCLEOTIDE SEQUENCE [LARGE SCALE GENOMIC DNA]</scope>
    <source>
        <strain>ATCC 43067 / DSM 2661 / JAL-1 / JCM 10045 / NBRC 100440</strain>
    </source>
</reference>